<evidence type="ECO:0000255" key="1">
    <source>
        <dbReference type="HAMAP-Rule" id="MF_00558"/>
    </source>
</evidence>
<comment type="function">
    <text evidence="1">Succinyl-CoA synthetase functions in the citric acid cycle (TCA), coupling the hydrolysis of succinyl-CoA to the synthesis of either ATP or GTP and thus represents the only step of substrate-level phosphorylation in the TCA. The beta subunit provides nucleotide specificity of the enzyme and binds the substrate succinate, while the binding sites for coenzyme A and phosphate are found in the alpha subunit.</text>
</comment>
<comment type="catalytic activity">
    <reaction evidence="1">
        <text>succinate + ATP + CoA = succinyl-CoA + ADP + phosphate</text>
        <dbReference type="Rhea" id="RHEA:17661"/>
        <dbReference type="ChEBI" id="CHEBI:30031"/>
        <dbReference type="ChEBI" id="CHEBI:30616"/>
        <dbReference type="ChEBI" id="CHEBI:43474"/>
        <dbReference type="ChEBI" id="CHEBI:57287"/>
        <dbReference type="ChEBI" id="CHEBI:57292"/>
        <dbReference type="ChEBI" id="CHEBI:456216"/>
        <dbReference type="EC" id="6.2.1.5"/>
    </reaction>
    <physiologicalReaction direction="right-to-left" evidence="1">
        <dbReference type="Rhea" id="RHEA:17663"/>
    </physiologicalReaction>
</comment>
<comment type="catalytic activity">
    <reaction evidence="1">
        <text>GTP + succinate + CoA = succinyl-CoA + GDP + phosphate</text>
        <dbReference type="Rhea" id="RHEA:22120"/>
        <dbReference type="ChEBI" id="CHEBI:30031"/>
        <dbReference type="ChEBI" id="CHEBI:37565"/>
        <dbReference type="ChEBI" id="CHEBI:43474"/>
        <dbReference type="ChEBI" id="CHEBI:57287"/>
        <dbReference type="ChEBI" id="CHEBI:57292"/>
        <dbReference type="ChEBI" id="CHEBI:58189"/>
    </reaction>
    <physiologicalReaction direction="right-to-left" evidence="1">
        <dbReference type="Rhea" id="RHEA:22122"/>
    </physiologicalReaction>
</comment>
<comment type="cofactor">
    <cofactor evidence="1">
        <name>Mg(2+)</name>
        <dbReference type="ChEBI" id="CHEBI:18420"/>
    </cofactor>
    <text evidence="1">Binds 1 Mg(2+) ion per subunit.</text>
</comment>
<comment type="pathway">
    <text evidence="1">Carbohydrate metabolism; tricarboxylic acid cycle; succinate from succinyl-CoA (ligase route): step 1/1.</text>
</comment>
<comment type="subunit">
    <text evidence="1">Heterotetramer of two alpha and two beta subunits.</text>
</comment>
<comment type="similarity">
    <text evidence="1">Belongs to the succinate/malate CoA ligase beta subunit family.</text>
</comment>
<dbReference type="EC" id="6.2.1.5" evidence="1"/>
<dbReference type="EMBL" id="AE014291">
    <property type="protein sequence ID" value="AAN30818.1"/>
    <property type="molecule type" value="Genomic_DNA"/>
</dbReference>
<dbReference type="EMBL" id="CP002997">
    <property type="protein sequence ID" value="AEM19235.1"/>
    <property type="molecule type" value="Genomic_DNA"/>
</dbReference>
<dbReference type="RefSeq" id="WP_002964994.1">
    <property type="nucleotide sequence ID" value="NZ_KN046804.1"/>
</dbReference>
<dbReference type="SMR" id="P66868"/>
<dbReference type="GeneID" id="97534788"/>
<dbReference type="KEGG" id="bms:BR1926"/>
<dbReference type="KEGG" id="bsi:BS1330_I1920"/>
<dbReference type="PATRIC" id="fig|204722.21.peg.2977"/>
<dbReference type="HOGENOM" id="CLU_037430_0_2_5"/>
<dbReference type="PhylomeDB" id="P66868"/>
<dbReference type="UniPathway" id="UPA00223">
    <property type="reaction ID" value="UER00999"/>
</dbReference>
<dbReference type="Proteomes" id="UP000007104">
    <property type="component" value="Chromosome I"/>
</dbReference>
<dbReference type="GO" id="GO:0005829">
    <property type="term" value="C:cytosol"/>
    <property type="evidence" value="ECO:0007669"/>
    <property type="project" value="TreeGrafter"/>
</dbReference>
<dbReference type="GO" id="GO:0042709">
    <property type="term" value="C:succinate-CoA ligase complex"/>
    <property type="evidence" value="ECO:0007669"/>
    <property type="project" value="TreeGrafter"/>
</dbReference>
<dbReference type="GO" id="GO:0005524">
    <property type="term" value="F:ATP binding"/>
    <property type="evidence" value="ECO:0007669"/>
    <property type="project" value="UniProtKB-UniRule"/>
</dbReference>
<dbReference type="GO" id="GO:0000287">
    <property type="term" value="F:magnesium ion binding"/>
    <property type="evidence" value="ECO:0007669"/>
    <property type="project" value="UniProtKB-UniRule"/>
</dbReference>
<dbReference type="GO" id="GO:0004775">
    <property type="term" value="F:succinate-CoA ligase (ADP-forming) activity"/>
    <property type="evidence" value="ECO:0007669"/>
    <property type="project" value="UniProtKB-UniRule"/>
</dbReference>
<dbReference type="GO" id="GO:0004776">
    <property type="term" value="F:succinate-CoA ligase (GDP-forming) activity"/>
    <property type="evidence" value="ECO:0007669"/>
    <property type="project" value="RHEA"/>
</dbReference>
<dbReference type="GO" id="GO:0006104">
    <property type="term" value="P:succinyl-CoA metabolic process"/>
    <property type="evidence" value="ECO:0007669"/>
    <property type="project" value="TreeGrafter"/>
</dbReference>
<dbReference type="GO" id="GO:0006099">
    <property type="term" value="P:tricarboxylic acid cycle"/>
    <property type="evidence" value="ECO:0007669"/>
    <property type="project" value="UniProtKB-UniRule"/>
</dbReference>
<dbReference type="FunFam" id="3.30.1490.20:FF:000002">
    <property type="entry name" value="Succinate--CoA ligase [ADP-forming] subunit beta"/>
    <property type="match status" value="1"/>
</dbReference>
<dbReference type="FunFam" id="3.30.470.20:FF:000002">
    <property type="entry name" value="Succinate--CoA ligase [ADP-forming] subunit beta"/>
    <property type="match status" value="1"/>
</dbReference>
<dbReference type="FunFam" id="3.40.50.261:FF:000001">
    <property type="entry name" value="Succinate--CoA ligase [ADP-forming] subunit beta"/>
    <property type="match status" value="1"/>
</dbReference>
<dbReference type="Gene3D" id="3.30.1490.20">
    <property type="entry name" value="ATP-grasp fold, A domain"/>
    <property type="match status" value="1"/>
</dbReference>
<dbReference type="Gene3D" id="3.30.470.20">
    <property type="entry name" value="ATP-grasp fold, B domain"/>
    <property type="match status" value="1"/>
</dbReference>
<dbReference type="Gene3D" id="3.40.50.261">
    <property type="entry name" value="Succinyl-CoA synthetase domains"/>
    <property type="match status" value="1"/>
</dbReference>
<dbReference type="HAMAP" id="MF_00558">
    <property type="entry name" value="Succ_CoA_beta"/>
    <property type="match status" value="1"/>
</dbReference>
<dbReference type="InterPro" id="IPR011761">
    <property type="entry name" value="ATP-grasp"/>
</dbReference>
<dbReference type="InterPro" id="IPR013650">
    <property type="entry name" value="ATP-grasp_succ-CoA_synth-type"/>
</dbReference>
<dbReference type="InterPro" id="IPR013815">
    <property type="entry name" value="ATP_grasp_subdomain_1"/>
</dbReference>
<dbReference type="InterPro" id="IPR017866">
    <property type="entry name" value="Succ-CoA_synthase_bsu_CS"/>
</dbReference>
<dbReference type="InterPro" id="IPR005811">
    <property type="entry name" value="SUCC_ACL_C"/>
</dbReference>
<dbReference type="InterPro" id="IPR005809">
    <property type="entry name" value="Succ_CoA_ligase-like_bsu"/>
</dbReference>
<dbReference type="InterPro" id="IPR016102">
    <property type="entry name" value="Succinyl-CoA_synth-like"/>
</dbReference>
<dbReference type="NCBIfam" id="NF001913">
    <property type="entry name" value="PRK00696.1"/>
    <property type="match status" value="1"/>
</dbReference>
<dbReference type="NCBIfam" id="TIGR01016">
    <property type="entry name" value="sucCoAbeta"/>
    <property type="match status" value="1"/>
</dbReference>
<dbReference type="PANTHER" id="PTHR11815:SF10">
    <property type="entry name" value="SUCCINATE--COA LIGASE [GDP-FORMING] SUBUNIT BETA, MITOCHONDRIAL"/>
    <property type="match status" value="1"/>
</dbReference>
<dbReference type="PANTHER" id="PTHR11815">
    <property type="entry name" value="SUCCINYL-COA SYNTHETASE BETA CHAIN"/>
    <property type="match status" value="1"/>
</dbReference>
<dbReference type="Pfam" id="PF08442">
    <property type="entry name" value="ATP-grasp_2"/>
    <property type="match status" value="1"/>
</dbReference>
<dbReference type="Pfam" id="PF00549">
    <property type="entry name" value="Ligase_CoA"/>
    <property type="match status" value="1"/>
</dbReference>
<dbReference type="PIRSF" id="PIRSF001554">
    <property type="entry name" value="SucCS_beta"/>
    <property type="match status" value="1"/>
</dbReference>
<dbReference type="SUPFAM" id="SSF56059">
    <property type="entry name" value="Glutathione synthetase ATP-binding domain-like"/>
    <property type="match status" value="1"/>
</dbReference>
<dbReference type="SUPFAM" id="SSF52210">
    <property type="entry name" value="Succinyl-CoA synthetase domains"/>
    <property type="match status" value="1"/>
</dbReference>
<dbReference type="PROSITE" id="PS50975">
    <property type="entry name" value="ATP_GRASP"/>
    <property type="match status" value="1"/>
</dbReference>
<dbReference type="PROSITE" id="PS01217">
    <property type="entry name" value="SUCCINYL_COA_LIG_3"/>
    <property type="match status" value="1"/>
</dbReference>
<gene>
    <name evidence="1" type="primary">sucC</name>
    <name type="ordered locus">BR1926</name>
    <name type="ordered locus">BS1330_I1920</name>
</gene>
<feature type="chain" id="PRO_0000102821" description="Succinate--CoA ligase [ADP-forming] subunit beta">
    <location>
        <begin position="1"/>
        <end position="398"/>
    </location>
</feature>
<feature type="domain" description="ATP-grasp" evidence="1">
    <location>
        <begin position="9"/>
        <end position="254"/>
    </location>
</feature>
<feature type="binding site" evidence="1">
    <location>
        <position position="46"/>
    </location>
    <ligand>
        <name>ATP</name>
        <dbReference type="ChEBI" id="CHEBI:30616"/>
    </ligand>
</feature>
<feature type="binding site" evidence="1">
    <location>
        <begin position="53"/>
        <end position="55"/>
    </location>
    <ligand>
        <name>ATP</name>
        <dbReference type="ChEBI" id="CHEBI:30616"/>
    </ligand>
</feature>
<feature type="binding site" evidence="1">
    <location>
        <position position="109"/>
    </location>
    <ligand>
        <name>ATP</name>
        <dbReference type="ChEBI" id="CHEBI:30616"/>
    </ligand>
</feature>
<feature type="binding site" evidence="1">
    <location>
        <position position="112"/>
    </location>
    <ligand>
        <name>ATP</name>
        <dbReference type="ChEBI" id="CHEBI:30616"/>
    </ligand>
</feature>
<feature type="binding site" evidence="1">
    <location>
        <position position="117"/>
    </location>
    <ligand>
        <name>ATP</name>
        <dbReference type="ChEBI" id="CHEBI:30616"/>
    </ligand>
</feature>
<feature type="binding site" evidence="1">
    <location>
        <position position="209"/>
    </location>
    <ligand>
        <name>Mg(2+)</name>
        <dbReference type="ChEBI" id="CHEBI:18420"/>
    </ligand>
</feature>
<feature type="binding site" evidence="1">
    <location>
        <position position="223"/>
    </location>
    <ligand>
        <name>Mg(2+)</name>
        <dbReference type="ChEBI" id="CHEBI:18420"/>
    </ligand>
</feature>
<feature type="binding site" evidence="1">
    <location>
        <position position="274"/>
    </location>
    <ligand>
        <name>substrate</name>
        <note>ligand shared with subunit alpha</note>
    </ligand>
</feature>
<feature type="binding site" evidence="1">
    <location>
        <begin position="331"/>
        <end position="333"/>
    </location>
    <ligand>
        <name>substrate</name>
        <note>ligand shared with subunit alpha</note>
    </ligand>
</feature>
<name>SUCC_BRUSU</name>
<sequence length="398" mass="42527">MNIHEYQAKRLLHTYGAPIANGVAVYSVEQAEEWAKTLPGPLYVVKSQIHAGGRGKGKFKELPADAKGGVRLAKSVEEVVANAKEMLGNTLVTKQTGEAGKQVNRLYIEDGADIERELYLSILIDRSVGRPAFVVSTEGGMDIEAVAEETPEKIVTVAIDPAKGVTDEDANKLADALKLEGGAREDGLKLFPILYKAFTEKDMSLLEINPLIVMTNGRVRVLDAKVSFDNNALFRHPDIVELRDLTEEDPKEIEASKYDLAYVALDGNIGCMVNGAGLAMATMDIIKLYGAEPANFLDVGGGASKEKVTAAFKIITADPAVEGILVNIFGGIMKCDVIAEGVIAAVKEVGLKVPLVVRLEGTNVELGKKIINESGLNVISADDLDDAAQKIVAAVKGN</sequence>
<proteinExistence type="inferred from homology"/>
<organism>
    <name type="scientific">Brucella suis biovar 1 (strain 1330)</name>
    <dbReference type="NCBI Taxonomy" id="204722"/>
    <lineage>
        <taxon>Bacteria</taxon>
        <taxon>Pseudomonadati</taxon>
        <taxon>Pseudomonadota</taxon>
        <taxon>Alphaproteobacteria</taxon>
        <taxon>Hyphomicrobiales</taxon>
        <taxon>Brucellaceae</taxon>
        <taxon>Brucella/Ochrobactrum group</taxon>
        <taxon>Brucella</taxon>
    </lineage>
</organism>
<protein>
    <recommendedName>
        <fullName evidence="1">Succinate--CoA ligase [ADP-forming] subunit beta</fullName>
        <ecNumber evidence="1">6.2.1.5</ecNumber>
    </recommendedName>
    <alternativeName>
        <fullName evidence="1">Succinyl-CoA synthetase subunit beta</fullName>
        <shortName evidence="1">SCS-beta</shortName>
    </alternativeName>
</protein>
<reference key="1">
    <citation type="journal article" date="2002" name="Proc. Natl. Acad. Sci. U.S.A.">
        <title>The Brucella suis genome reveals fundamental similarities between animal and plant pathogens and symbionts.</title>
        <authorList>
            <person name="Paulsen I.T."/>
            <person name="Seshadri R."/>
            <person name="Nelson K.E."/>
            <person name="Eisen J.A."/>
            <person name="Heidelberg J.F."/>
            <person name="Read T.D."/>
            <person name="Dodson R.J."/>
            <person name="Umayam L.A."/>
            <person name="Brinkac L.M."/>
            <person name="Beanan M.J."/>
            <person name="Daugherty S.C."/>
            <person name="DeBoy R.T."/>
            <person name="Durkin A.S."/>
            <person name="Kolonay J.F."/>
            <person name="Madupu R."/>
            <person name="Nelson W.C."/>
            <person name="Ayodeji B."/>
            <person name="Kraul M."/>
            <person name="Shetty J."/>
            <person name="Malek J.A."/>
            <person name="Van Aken S.E."/>
            <person name="Riedmuller S."/>
            <person name="Tettelin H."/>
            <person name="Gill S.R."/>
            <person name="White O."/>
            <person name="Salzberg S.L."/>
            <person name="Hoover D.L."/>
            <person name="Lindler L.E."/>
            <person name="Halling S.M."/>
            <person name="Boyle S.M."/>
            <person name="Fraser C.M."/>
        </authorList>
    </citation>
    <scope>NUCLEOTIDE SEQUENCE [LARGE SCALE GENOMIC DNA]</scope>
    <source>
        <strain>1330</strain>
    </source>
</reference>
<reference key="2">
    <citation type="journal article" date="2011" name="J. Bacteriol.">
        <title>Revised genome sequence of Brucella suis 1330.</title>
        <authorList>
            <person name="Tae H."/>
            <person name="Shallom S."/>
            <person name="Settlage R."/>
            <person name="Preston D."/>
            <person name="Adams L.G."/>
            <person name="Garner H.R."/>
        </authorList>
    </citation>
    <scope>NUCLEOTIDE SEQUENCE [LARGE SCALE GENOMIC DNA]</scope>
    <source>
        <strain>1330</strain>
    </source>
</reference>
<keyword id="KW-0067">ATP-binding</keyword>
<keyword id="KW-0436">Ligase</keyword>
<keyword id="KW-0460">Magnesium</keyword>
<keyword id="KW-0479">Metal-binding</keyword>
<keyword id="KW-0547">Nucleotide-binding</keyword>
<keyword id="KW-0816">Tricarboxylic acid cycle</keyword>
<accession>P66868</accession>
<accession>G0K869</accession>
<accession>Q8YJE6</accession>